<reference key="1">
    <citation type="journal article" date="2002" name="Proc. Natl. Acad. Sci. U.S.A.">
        <title>Extensive mosaic structure revealed by the complete genome sequence of uropathogenic Escherichia coli.</title>
        <authorList>
            <person name="Welch R.A."/>
            <person name="Burland V."/>
            <person name="Plunkett G. III"/>
            <person name="Redford P."/>
            <person name="Roesch P."/>
            <person name="Rasko D."/>
            <person name="Buckles E.L."/>
            <person name="Liou S.-R."/>
            <person name="Boutin A."/>
            <person name="Hackett J."/>
            <person name="Stroud D."/>
            <person name="Mayhew G.F."/>
            <person name="Rose D.J."/>
            <person name="Zhou S."/>
            <person name="Schwartz D.C."/>
            <person name="Perna N.T."/>
            <person name="Mobley H.L.T."/>
            <person name="Donnenberg M.S."/>
            <person name="Blattner F.R."/>
        </authorList>
    </citation>
    <scope>NUCLEOTIDE SEQUENCE [LARGE SCALE GENOMIC DNA]</scope>
    <source>
        <strain>CFT073 / ATCC 700928 / UPEC</strain>
    </source>
</reference>
<organism>
    <name type="scientific">Escherichia coli O6:H1 (strain CFT073 / ATCC 700928 / UPEC)</name>
    <dbReference type="NCBI Taxonomy" id="199310"/>
    <lineage>
        <taxon>Bacteria</taxon>
        <taxon>Pseudomonadati</taxon>
        <taxon>Pseudomonadota</taxon>
        <taxon>Gammaproteobacteria</taxon>
        <taxon>Enterobacterales</taxon>
        <taxon>Enterobacteriaceae</taxon>
        <taxon>Escherichia</taxon>
    </lineage>
</organism>
<dbReference type="EC" id="3.1.4.-" evidence="1"/>
<dbReference type="EMBL" id="AE014075">
    <property type="protein sequence ID" value="AAN81297.1"/>
    <property type="molecule type" value="Genomic_DNA"/>
</dbReference>
<dbReference type="SMR" id="P67096"/>
<dbReference type="STRING" id="199310.c2843"/>
<dbReference type="KEGG" id="ecc:c2843"/>
<dbReference type="eggNOG" id="COG0622">
    <property type="taxonomic scope" value="Bacteria"/>
</dbReference>
<dbReference type="HOGENOM" id="CLU_063749_1_1_6"/>
<dbReference type="BioCyc" id="ECOL199310:C2843-MONOMER"/>
<dbReference type="Proteomes" id="UP000001410">
    <property type="component" value="Chromosome"/>
</dbReference>
<dbReference type="GO" id="GO:0016787">
    <property type="term" value="F:hydrolase activity"/>
    <property type="evidence" value="ECO:0007669"/>
    <property type="project" value="UniProtKB-KW"/>
</dbReference>
<dbReference type="GO" id="GO:0046872">
    <property type="term" value="F:metal ion binding"/>
    <property type="evidence" value="ECO:0007669"/>
    <property type="project" value="UniProtKB-KW"/>
</dbReference>
<dbReference type="CDD" id="cd00841">
    <property type="entry name" value="MPP_YfcE"/>
    <property type="match status" value="1"/>
</dbReference>
<dbReference type="FunFam" id="3.60.21.10:FF:000018">
    <property type="entry name" value="Phosphoesterase"/>
    <property type="match status" value="1"/>
</dbReference>
<dbReference type="Gene3D" id="3.60.21.10">
    <property type="match status" value="1"/>
</dbReference>
<dbReference type="InterPro" id="IPR024654">
    <property type="entry name" value="Calcineurin-like_PHP_lpxH"/>
</dbReference>
<dbReference type="InterPro" id="IPR029052">
    <property type="entry name" value="Metallo-depent_PP-like"/>
</dbReference>
<dbReference type="InterPro" id="IPR041802">
    <property type="entry name" value="MPP_YfcE"/>
</dbReference>
<dbReference type="InterPro" id="IPR020935">
    <property type="entry name" value="PdiEstase_YfcE_CS"/>
</dbReference>
<dbReference type="InterPro" id="IPR000979">
    <property type="entry name" value="Phosphodiesterase_MJ0936/Vps29"/>
</dbReference>
<dbReference type="NCBIfam" id="NF006988">
    <property type="entry name" value="PRK09453.1"/>
    <property type="match status" value="1"/>
</dbReference>
<dbReference type="NCBIfam" id="TIGR00040">
    <property type="entry name" value="yfcE"/>
    <property type="match status" value="1"/>
</dbReference>
<dbReference type="PANTHER" id="PTHR11124">
    <property type="entry name" value="VACUOLAR SORTING PROTEIN VPS29"/>
    <property type="match status" value="1"/>
</dbReference>
<dbReference type="Pfam" id="PF12850">
    <property type="entry name" value="Metallophos_2"/>
    <property type="match status" value="1"/>
</dbReference>
<dbReference type="SUPFAM" id="SSF56300">
    <property type="entry name" value="Metallo-dependent phosphatases"/>
    <property type="match status" value="1"/>
</dbReference>
<dbReference type="PROSITE" id="PS01269">
    <property type="entry name" value="UPF0025"/>
    <property type="match status" value="1"/>
</dbReference>
<gene>
    <name type="primary">yfcE</name>
    <name type="ordered locus">c2843</name>
</gene>
<feature type="chain" id="PRO_0000155607" description="Phosphodiesterase YfcE">
    <location>
        <begin position="1"/>
        <end position="184"/>
    </location>
</feature>
<feature type="binding site" evidence="1">
    <location>
        <position position="9"/>
    </location>
    <ligand>
        <name>Mn(2+)</name>
        <dbReference type="ChEBI" id="CHEBI:29035"/>
        <label>1</label>
    </ligand>
</feature>
<feature type="binding site" evidence="1">
    <location>
        <position position="11"/>
    </location>
    <ligand>
        <name>Mn(2+)</name>
        <dbReference type="ChEBI" id="CHEBI:29035"/>
        <label>1</label>
    </ligand>
</feature>
<feature type="binding site" evidence="1">
    <location>
        <position position="37"/>
    </location>
    <ligand>
        <name>Mn(2+)</name>
        <dbReference type="ChEBI" id="CHEBI:29035"/>
        <label>1</label>
    </ligand>
</feature>
<feature type="binding site" evidence="1">
    <location>
        <position position="37"/>
    </location>
    <ligand>
        <name>Mn(2+)</name>
        <dbReference type="ChEBI" id="CHEBI:29035"/>
        <label>2</label>
    </ligand>
</feature>
<feature type="binding site" evidence="1">
    <location>
        <position position="73"/>
    </location>
    <ligand>
        <name>Mn(2+)</name>
        <dbReference type="ChEBI" id="CHEBI:29035"/>
        <label>2</label>
    </ligand>
</feature>
<feature type="binding site" evidence="1">
    <location>
        <position position="105"/>
    </location>
    <ligand>
        <name>Mn(2+)</name>
        <dbReference type="ChEBI" id="CHEBI:29035"/>
        <label>2</label>
    </ligand>
</feature>
<feature type="binding site" evidence="1">
    <location>
        <position position="127"/>
    </location>
    <ligand>
        <name>Mn(2+)</name>
        <dbReference type="ChEBI" id="CHEBI:29035"/>
        <label>2</label>
    </ligand>
</feature>
<feature type="binding site" evidence="1">
    <location>
        <position position="129"/>
    </location>
    <ligand>
        <name>Mn(2+)</name>
        <dbReference type="ChEBI" id="CHEBI:29035"/>
        <label>1</label>
    </ligand>
</feature>
<comment type="function">
    <text evidence="1">Shows phosphodiesterase activity.</text>
</comment>
<comment type="cofactor">
    <cofactor evidence="1">
        <name>Mn(2+)</name>
        <dbReference type="ChEBI" id="CHEBI:29035"/>
    </cofactor>
    <text evidence="1">Binds 2 manganese ions per subunit.</text>
</comment>
<comment type="similarity">
    <text evidence="2">Belongs to the metallophosphoesterase superfamily. YfcE family.</text>
</comment>
<accession>P67096</accession>
<accession>P76495</accession>
<name>YFCE_ECOL6</name>
<proteinExistence type="inferred from homology"/>
<keyword id="KW-0378">Hydrolase</keyword>
<keyword id="KW-0464">Manganese</keyword>
<keyword id="KW-0479">Metal-binding</keyword>
<keyword id="KW-1185">Reference proteome</keyword>
<protein>
    <recommendedName>
        <fullName evidence="1">Phosphodiesterase YfcE</fullName>
        <ecNumber evidence="1">3.1.4.-</ecNumber>
    </recommendedName>
</protein>
<evidence type="ECO:0000250" key="1">
    <source>
        <dbReference type="UniProtKB" id="P67095"/>
    </source>
</evidence>
<evidence type="ECO:0000305" key="2"/>
<sequence length="184" mass="20122">MMKLMFASDIHGSLPATERVLELFAQSGAQWLVILGDVLNHGPRNALPEGYAPAKVAERLNEVAHKVIAVRGNCDSEVDQMLLHFPITAPWQQVLLEKQRLFLTHGHLFGPENLPALNQNDVLVYGHTHLPVAEQRGEIFHFNPGSVSIPKGGNPASYGMLDNDVLSVIALNDQSIIAQVAINP</sequence>